<feature type="chain" id="PRO_0000115409" description="Small ribosomal subunit protein uS15">
    <location>
        <begin position="1"/>
        <end position="89"/>
    </location>
</feature>
<reference key="1">
    <citation type="journal article" date="2005" name="PLoS Genet.">
        <title>Life in hot carbon monoxide: the complete genome sequence of Carboxydothermus hydrogenoformans Z-2901.</title>
        <authorList>
            <person name="Wu M."/>
            <person name="Ren Q."/>
            <person name="Durkin A.S."/>
            <person name="Daugherty S.C."/>
            <person name="Brinkac L.M."/>
            <person name="Dodson R.J."/>
            <person name="Madupu R."/>
            <person name="Sullivan S.A."/>
            <person name="Kolonay J.F."/>
            <person name="Nelson W.C."/>
            <person name="Tallon L.J."/>
            <person name="Jones K.M."/>
            <person name="Ulrich L.E."/>
            <person name="Gonzalez J.M."/>
            <person name="Zhulin I.B."/>
            <person name="Robb F.T."/>
            <person name="Eisen J.A."/>
        </authorList>
    </citation>
    <scope>NUCLEOTIDE SEQUENCE [LARGE SCALE GENOMIC DNA]</scope>
    <source>
        <strain>ATCC BAA-161 / DSM 6008 / Z-2901</strain>
    </source>
</reference>
<protein>
    <recommendedName>
        <fullName evidence="1">Small ribosomal subunit protein uS15</fullName>
    </recommendedName>
    <alternativeName>
        <fullName evidence="2">30S ribosomal protein S15</fullName>
    </alternativeName>
</protein>
<accession>Q3ABA4</accession>
<sequence length="89" mass="10660">MALTQEQKMEIISKYQLHEKDTGSPEVQIAILTERINQLTEHLKVHKKDFHSRRGLLKMVGQRRSLLNYLKRKDFERYRAIVEKLGLRK</sequence>
<gene>
    <name evidence="1" type="primary">rpsO</name>
    <name type="ordered locus">CHY_1760</name>
</gene>
<name>RS15_CARHZ</name>
<evidence type="ECO:0000255" key="1">
    <source>
        <dbReference type="HAMAP-Rule" id="MF_01343"/>
    </source>
</evidence>
<evidence type="ECO:0000305" key="2"/>
<proteinExistence type="inferred from homology"/>
<dbReference type="EMBL" id="CP000141">
    <property type="protein sequence ID" value="ABB13798.1"/>
    <property type="molecule type" value="Genomic_DNA"/>
</dbReference>
<dbReference type="SMR" id="Q3ABA4"/>
<dbReference type="FunCoup" id="Q3ABA4">
    <property type="interactions" value="386"/>
</dbReference>
<dbReference type="STRING" id="246194.CHY_1760"/>
<dbReference type="KEGG" id="chy:CHY_1760"/>
<dbReference type="eggNOG" id="COG0184">
    <property type="taxonomic scope" value="Bacteria"/>
</dbReference>
<dbReference type="HOGENOM" id="CLU_148518_0_0_9"/>
<dbReference type="InParanoid" id="Q3ABA4"/>
<dbReference type="OrthoDB" id="9799262at2"/>
<dbReference type="Proteomes" id="UP000002706">
    <property type="component" value="Chromosome"/>
</dbReference>
<dbReference type="GO" id="GO:0022627">
    <property type="term" value="C:cytosolic small ribosomal subunit"/>
    <property type="evidence" value="ECO:0007669"/>
    <property type="project" value="TreeGrafter"/>
</dbReference>
<dbReference type="GO" id="GO:0019843">
    <property type="term" value="F:rRNA binding"/>
    <property type="evidence" value="ECO:0007669"/>
    <property type="project" value="UniProtKB-UniRule"/>
</dbReference>
<dbReference type="GO" id="GO:0003735">
    <property type="term" value="F:structural constituent of ribosome"/>
    <property type="evidence" value="ECO:0007669"/>
    <property type="project" value="InterPro"/>
</dbReference>
<dbReference type="GO" id="GO:0006412">
    <property type="term" value="P:translation"/>
    <property type="evidence" value="ECO:0007669"/>
    <property type="project" value="UniProtKB-UniRule"/>
</dbReference>
<dbReference type="CDD" id="cd00353">
    <property type="entry name" value="Ribosomal_S15p_S13e"/>
    <property type="match status" value="1"/>
</dbReference>
<dbReference type="FunFam" id="1.10.287.10:FF:000002">
    <property type="entry name" value="30S ribosomal protein S15"/>
    <property type="match status" value="1"/>
</dbReference>
<dbReference type="Gene3D" id="6.10.250.3130">
    <property type="match status" value="1"/>
</dbReference>
<dbReference type="Gene3D" id="1.10.287.10">
    <property type="entry name" value="S15/NS1, RNA-binding"/>
    <property type="match status" value="1"/>
</dbReference>
<dbReference type="HAMAP" id="MF_01343_B">
    <property type="entry name" value="Ribosomal_uS15_B"/>
    <property type="match status" value="1"/>
</dbReference>
<dbReference type="InterPro" id="IPR000589">
    <property type="entry name" value="Ribosomal_uS15"/>
</dbReference>
<dbReference type="InterPro" id="IPR005290">
    <property type="entry name" value="Ribosomal_uS15_bac-type"/>
</dbReference>
<dbReference type="InterPro" id="IPR009068">
    <property type="entry name" value="uS15_NS1_RNA-bd_sf"/>
</dbReference>
<dbReference type="NCBIfam" id="TIGR00952">
    <property type="entry name" value="S15_bact"/>
    <property type="match status" value="1"/>
</dbReference>
<dbReference type="PANTHER" id="PTHR23321">
    <property type="entry name" value="RIBOSOMAL PROTEIN S15, BACTERIAL AND ORGANELLAR"/>
    <property type="match status" value="1"/>
</dbReference>
<dbReference type="PANTHER" id="PTHR23321:SF26">
    <property type="entry name" value="SMALL RIBOSOMAL SUBUNIT PROTEIN US15M"/>
    <property type="match status" value="1"/>
</dbReference>
<dbReference type="Pfam" id="PF00312">
    <property type="entry name" value="Ribosomal_S15"/>
    <property type="match status" value="1"/>
</dbReference>
<dbReference type="SMART" id="SM01387">
    <property type="entry name" value="Ribosomal_S15"/>
    <property type="match status" value="1"/>
</dbReference>
<dbReference type="SUPFAM" id="SSF47060">
    <property type="entry name" value="S15/NS1 RNA-binding domain"/>
    <property type="match status" value="1"/>
</dbReference>
<dbReference type="PROSITE" id="PS00362">
    <property type="entry name" value="RIBOSOMAL_S15"/>
    <property type="match status" value="1"/>
</dbReference>
<organism>
    <name type="scientific">Carboxydothermus hydrogenoformans (strain ATCC BAA-161 / DSM 6008 / Z-2901)</name>
    <dbReference type="NCBI Taxonomy" id="246194"/>
    <lineage>
        <taxon>Bacteria</taxon>
        <taxon>Bacillati</taxon>
        <taxon>Bacillota</taxon>
        <taxon>Clostridia</taxon>
        <taxon>Thermoanaerobacterales</taxon>
        <taxon>Thermoanaerobacteraceae</taxon>
        <taxon>Carboxydothermus</taxon>
    </lineage>
</organism>
<comment type="function">
    <text evidence="1">One of the primary rRNA binding proteins, it binds directly to 16S rRNA where it helps nucleate assembly of the platform of the 30S subunit by binding and bridging several RNA helices of the 16S rRNA.</text>
</comment>
<comment type="function">
    <text evidence="1">Forms an intersubunit bridge (bridge B4) with the 23S rRNA of the 50S subunit in the ribosome.</text>
</comment>
<comment type="subunit">
    <text evidence="1">Part of the 30S ribosomal subunit. Forms a bridge to the 50S subunit in the 70S ribosome, contacting the 23S rRNA.</text>
</comment>
<comment type="similarity">
    <text evidence="1">Belongs to the universal ribosomal protein uS15 family.</text>
</comment>
<keyword id="KW-1185">Reference proteome</keyword>
<keyword id="KW-0687">Ribonucleoprotein</keyword>
<keyword id="KW-0689">Ribosomal protein</keyword>
<keyword id="KW-0694">RNA-binding</keyword>
<keyword id="KW-0699">rRNA-binding</keyword>